<comment type="function">
    <text evidence="2">Reversibly blocks Kv11/ERG potassium channels.</text>
</comment>
<comment type="subcellular location">
    <subcellularLocation>
        <location evidence="3">Secreted</location>
    </subcellularLocation>
</comment>
<comment type="tissue specificity">
    <text evidence="5">Expressed by the venom gland.</text>
</comment>
<comment type="domain">
    <text evidence="1">The presence of a 'disulfide through disulfide knot' structurally defines this protein as a knottin.</text>
</comment>
<comment type="domain">
    <text evidence="2">Has the CSalpha/beta fold, which comprises one or two short alpha helices connected to anti-parallel beta-sheets stabilized by three or four disulfide bonds.</text>
</comment>
<comment type="similarity">
    <text evidence="5">Belongs to the ergtoxin family. Gamma-KTx 5 subfamily.</text>
</comment>
<feature type="chain" id="PRO_0000066849" description="Potassium channel toxin gamma-KTx 5.2">
    <location>
        <begin position="1"/>
        <end position="47"/>
    </location>
</feature>
<feature type="disulfide bond" evidence="2">
    <location>
        <begin position="5"/>
        <end position="23"/>
    </location>
</feature>
<feature type="disulfide bond" evidence="2">
    <location>
        <begin position="11"/>
        <end position="34"/>
    </location>
</feature>
<feature type="disulfide bond" evidence="2">
    <location>
        <begin position="20"/>
        <end position="39"/>
    </location>
</feature>
<feature type="disulfide bond" evidence="2">
    <location>
        <begin position="24"/>
        <end position="41"/>
    </location>
</feature>
<sequence>DRDSCVDKSRCQKYGPYGQCTDCCKKAGHTGGTCIYFKCKCGAESGR</sequence>
<accession>Q86QV1</accession>
<keyword id="KW-1015">Disulfide bond</keyword>
<keyword id="KW-0872">Ion channel impairing toxin</keyword>
<keyword id="KW-0960">Knottin</keyword>
<keyword id="KW-0528">Neurotoxin</keyword>
<keyword id="KW-0632">Potassium channel impairing toxin</keyword>
<keyword id="KW-0964">Secreted</keyword>
<keyword id="KW-0800">Toxin</keyword>
<keyword id="KW-1220">Voltage-gated potassium channel impairing toxin</keyword>
<reference key="1">
    <citation type="journal article" date="2002" name="FEBS Lett.">
        <title>A large number of novel Ergtoxin-like genes and ERG K+-channels blocking peptides from scorpions of the genus Centruroides.</title>
        <authorList>
            <person name="Corona M."/>
            <person name="Gurrola G.B."/>
            <person name="Merino E."/>
            <person name="Cassulini R.R."/>
            <person name="Valdez-Cruz N.A."/>
            <person name="Garcia B."/>
            <person name="Ramirez-Dominguez M.E."/>
            <person name="Coronas F.I."/>
            <person name="Zamudio F.Z."/>
            <person name="Wanke E."/>
            <person name="Possani L.D."/>
        </authorList>
    </citation>
    <scope>NUCLEOTIDE SEQUENCE [MRNA]</scope>
    <scope>NOMENCLATURE</scope>
    <source>
        <tissue>Venom gland</tissue>
    </source>
</reference>
<dbReference type="EMBL" id="AY159342">
    <property type="protein sequence ID" value="AAO22220.1"/>
    <property type="molecule type" value="mRNA"/>
</dbReference>
<dbReference type="SMR" id="Q86QV1"/>
<dbReference type="GO" id="GO:0005576">
    <property type="term" value="C:extracellular region"/>
    <property type="evidence" value="ECO:0007669"/>
    <property type="project" value="UniProtKB-SubCell"/>
</dbReference>
<dbReference type="GO" id="GO:0019870">
    <property type="term" value="F:potassium channel inhibitor activity"/>
    <property type="evidence" value="ECO:0007669"/>
    <property type="project" value="InterPro"/>
</dbReference>
<dbReference type="GO" id="GO:0090729">
    <property type="term" value="F:toxin activity"/>
    <property type="evidence" value="ECO:0007669"/>
    <property type="project" value="UniProtKB-KW"/>
</dbReference>
<dbReference type="Gene3D" id="3.30.30.10">
    <property type="entry name" value="Knottin, scorpion toxin-like"/>
    <property type="match status" value="1"/>
</dbReference>
<dbReference type="InterPro" id="IPR012622">
    <property type="entry name" value="Ergtoxin"/>
</dbReference>
<dbReference type="InterPro" id="IPR036574">
    <property type="entry name" value="Scorpion_toxin-like_sf"/>
</dbReference>
<dbReference type="Pfam" id="PF08086">
    <property type="entry name" value="Toxin_17"/>
    <property type="match status" value="1"/>
</dbReference>
<dbReference type="SUPFAM" id="SSF57095">
    <property type="entry name" value="Scorpion toxin-like"/>
    <property type="match status" value="1"/>
</dbReference>
<dbReference type="PROSITE" id="PS60026">
    <property type="entry name" value="ERGTX"/>
    <property type="match status" value="1"/>
</dbReference>
<name>KGX52_CENGR</name>
<protein>
    <recommendedName>
        <fullName evidence="4">Potassium channel toxin gamma-KTx 5.2</fullName>
    </recommendedName>
    <alternativeName>
        <fullName evidence="5">CgErgTx3</fullName>
        <shortName evidence="4">CgErg3</shortName>
        <shortName evidence="4">ErgTx3</shortName>
    </alternativeName>
    <alternativeName>
        <fullName evidence="4">Ergtoxin-like protein</fullName>
    </alternativeName>
</protein>
<evidence type="ECO:0000250" key="1"/>
<evidence type="ECO:0000250" key="2">
    <source>
        <dbReference type="UniProtKB" id="Q86QT3"/>
    </source>
</evidence>
<evidence type="ECO:0000250" key="3">
    <source>
        <dbReference type="UniProtKB" id="Q86QU9"/>
    </source>
</evidence>
<evidence type="ECO:0000303" key="4">
    <source>
    </source>
</evidence>
<evidence type="ECO:0000305" key="5"/>
<proteinExistence type="inferred from homology"/>
<organism>
    <name type="scientific">Centruroides gracilis</name>
    <name type="common">Slenderbrown scorpion</name>
    <name type="synonym">Florida bark scorpion</name>
    <dbReference type="NCBI Taxonomy" id="217898"/>
    <lineage>
        <taxon>Eukaryota</taxon>
        <taxon>Metazoa</taxon>
        <taxon>Ecdysozoa</taxon>
        <taxon>Arthropoda</taxon>
        <taxon>Chelicerata</taxon>
        <taxon>Arachnida</taxon>
        <taxon>Scorpiones</taxon>
        <taxon>Buthida</taxon>
        <taxon>Buthoidea</taxon>
        <taxon>Buthidae</taxon>
        <taxon>Centruroides</taxon>
    </lineage>
</organism>